<sequence>MLGRTLREVSAALKQGQITPTELCQKCLSLIKKTKFLNAYITVSEEVALKQAEESEKRYKKGHSLGDLDGIPIAVKDNFSTSGIETTCASNMLKGYVPPYNATVVQKLLDQGAVLMGKTNLDEFAMGSGSTDGVFGPVKNPWSYSKQYKEKTKHKAHGENEDSNWLITGGSSGGSAAAVATFTCFAALGSDTGGSTRNPAAHCGVVGFKPSYGLVSRHGLIPLVNSMDVPGILTRCVDDAAIVLGMLAGHDPKDSTTVQDPVKPFTLPSLTDVSKLCIGIPKEYLTPELSSEVQSLWSKAANLFESEGAKVIEVSLPHTSYSIVCYHVLCTSEVASNMARFDGLEYGHRCDIDVSTEAMYAATRREGFNDVVRGRILSGNFFLLKENYENYFIKAQKVRRLIANDFVNVFNSGVDVLLTPTTLREAVPYQEFIKEDNRTRSAQDDIFTQAVNMAGLPAVSPVALSNQGLPVGLQFIGRAFHDQQLLTVAKWFEKQVQFPVTQLQELMDDCSSVFEIEKLASVSLKQ</sequence>
<reference key="1">
    <citation type="journal article" date="2005" name="Nature">
        <title>Genome sequence, comparative analysis and haplotype structure of the domestic dog.</title>
        <authorList>
            <person name="Lindblad-Toh K."/>
            <person name="Wade C.M."/>
            <person name="Mikkelsen T.S."/>
            <person name="Karlsson E.K."/>
            <person name="Jaffe D.B."/>
            <person name="Kamal M."/>
            <person name="Clamp M."/>
            <person name="Chang J.L."/>
            <person name="Kulbokas E.J. III"/>
            <person name="Zody M.C."/>
            <person name="Mauceli E."/>
            <person name="Xie X."/>
            <person name="Breen M."/>
            <person name="Wayne R.K."/>
            <person name="Ostrander E.A."/>
            <person name="Ponting C.P."/>
            <person name="Galibert F."/>
            <person name="Smith D.R."/>
            <person name="deJong P.J."/>
            <person name="Kirkness E.F."/>
            <person name="Alvarez P."/>
            <person name="Biagi T."/>
            <person name="Brockman W."/>
            <person name="Butler J."/>
            <person name="Chin C.-W."/>
            <person name="Cook A."/>
            <person name="Cuff J."/>
            <person name="Daly M.J."/>
            <person name="DeCaprio D."/>
            <person name="Gnerre S."/>
            <person name="Grabherr M."/>
            <person name="Kellis M."/>
            <person name="Kleber M."/>
            <person name="Bardeleben C."/>
            <person name="Goodstadt L."/>
            <person name="Heger A."/>
            <person name="Hitte C."/>
            <person name="Kim L."/>
            <person name="Koepfli K.-P."/>
            <person name="Parker H.G."/>
            <person name="Pollinger J.P."/>
            <person name="Searle S.M.J."/>
            <person name="Sutter N.B."/>
            <person name="Thomas R."/>
            <person name="Webber C."/>
            <person name="Baldwin J."/>
            <person name="Abebe A."/>
            <person name="Abouelleil A."/>
            <person name="Aftuck L."/>
            <person name="Ait-Zahra M."/>
            <person name="Aldredge T."/>
            <person name="Allen N."/>
            <person name="An P."/>
            <person name="Anderson S."/>
            <person name="Antoine C."/>
            <person name="Arachchi H."/>
            <person name="Aslam A."/>
            <person name="Ayotte L."/>
            <person name="Bachantsang P."/>
            <person name="Barry A."/>
            <person name="Bayul T."/>
            <person name="Benamara M."/>
            <person name="Berlin A."/>
            <person name="Bessette D."/>
            <person name="Blitshteyn B."/>
            <person name="Bloom T."/>
            <person name="Blye J."/>
            <person name="Boguslavskiy L."/>
            <person name="Bonnet C."/>
            <person name="Boukhgalter B."/>
            <person name="Brown A."/>
            <person name="Cahill P."/>
            <person name="Calixte N."/>
            <person name="Camarata J."/>
            <person name="Cheshatsang Y."/>
            <person name="Chu J."/>
            <person name="Citroen M."/>
            <person name="Collymore A."/>
            <person name="Cooke P."/>
            <person name="Dawoe T."/>
            <person name="Daza R."/>
            <person name="Decktor K."/>
            <person name="DeGray S."/>
            <person name="Dhargay N."/>
            <person name="Dooley K."/>
            <person name="Dooley K."/>
            <person name="Dorje P."/>
            <person name="Dorjee K."/>
            <person name="Dorris L."/>
            <person name="Duffey N."/>
            <person name="Dupes A."/>
            <person name="Egbiremolen O."/>
            <person name="Elong R."/>
            <person name="Falk J."/>
            <person name="Farina A."/>
            <person name="Faro S."/>
            <person name="Ferguson D."/>
            <person name="Ferreira P."/>
            <person name="Fisher S."/>
            <person name="FitzGerald M."/>
            <person name="Foley K."/>
            <person name="Foley C."/>
            <person name="Franke A."/>
            <person name="Friedrich D."/>
            <person name="Gage D."/>
            <person name="Garber M."/>
            <person name="Gearin G."/>
            <person name="Giannoukos G."/>
            <person name="Goode T."/>
            <person name="Goyette A."/>
            <person name="Graham J."/>
            <person name="Grandbois E."/>
            <person name="Gyaltsen K."/>
            <person name="Hafez N."/>
            <person name="Hagopian D."/>
            <person name="Hagos B."/>
            <person name="Hall J."/>
            <person name="Healy C."/>
            <person name="Hegarty R."/>
            <person name="Honan T."/>
            <person name="Horn A."/>
            <person name="Houde N."/>
            <person name="Hughes L."/>
            <person name="Hunnicutt L."/>
            <person name="Husby M."/>
            <person name="Jester B."/>
            <person name="Jones C."/>
            <person name="Kamat A."/>
            <person name="Kanga B."/>
            <person name="Kells C."/>
            <person name="Khazanovich D."/>
            <person name="Kieu A.C."/>
            <person name="Kisner P."/>
            <person name="Kumar M."/>
            <person name="Lance K."/>
            <person name="Landers T."/>
            <person name="Lara M."/>
            <person name="Lee W."/>
            <person name="Leger J.-P."/>
            <person name="Lennon N."/>
            <person name="Leuper L."/>
            <person name="LeVine S."/>
            <person name="Liu J."/>
            <person name="Liu X."/>
            <person name="Lokyitsang Y."/>
            <person name="Lokyitsang T."/>
            <person name="Lui A."/>
            <person name="Macdonald J."/>
            <person name="Major J."/>
            <person name="Marabella R."/>
            <person name="Maru K."/>
            <person name="Matthews C."/>
            <person name="McDonough S."/>
            <person name="Mehta T."/>
            <person name="Meldrim J."/>
            <person name="Melnikov A."/>
            <person name="Meneus L."/>
            <person name="Mihalev A."/>
            <person name="Mihova T."/>
            <person name="Miller K."/>
            <person name="Mittelman R."/>
            <person name="Mlenga V."/>
            <person name="Mulrain L."/>
            <person name="Munson G."/>
            <person name="Navidi A."/>
            <person name="Naylor J."/>
            <person name="Nguyen T."/>
            <person name="Nguyen N."/>
            <person name="Nguyen C."/>
            <person name="Nguyen T."/>
            <person name="Nicol R."/>
            <person name="Norbu N."/>
            <person name="Norbu C."/>
            <person name="Novod N."/>
            <person name="Nyima T."/>
            <person name="Olandt P."/>
            <person name="O'Neill B."/>
            <person name="O'Neill K."/>
            <person name="Osman S."/>
            <person name="Oyono L."/>
            <person name="Patti C."/>
            <person name="Perrin D."/>
            <person name="Phunkhang P."/>
            <person name="Pierre F."/>
            <person name="Priest M."/>
            <person name="Rachupka A."/>
            <person name="Raghuraman S."/>
            <person name="Rameau R."/>
            <person name="Ray V."/>
            <person name="Raymond C."/>
            <person name="Rege F."/>
            <person name="Rise C."/>
            <person name="Rogers J."/>
            <person name="Rogov P."/>
            <person name="Sahalie J."/>
            <person name="Settipalli S."/>
            <person name="Sharpe T."/>
            <person name="Shea T."/>
            <person name="Sheehan M."/>
            <person name="Sherpa N."/>
            <person name="Shi J."/>
            <person name="Shih D."/>
            <person name="Sloan J."/>
            <person name="Smith C."/>
            <person name="Sparrow T."/>
            <person name="Stalker J."/>
            <person name="Stange-Thomann N."/>
            <person name="Stavropoulos S."/>
            <person name="Stone C."/>
            <person name="Stone S."/>
            <person name="Sykes S."/>
            <person name="Tchuinga P."/>
            <person name="Tenzing P."/>
            <person name="Tesfaye S."/>
            <person name="Thoulutsang D."/>
            <person name="Thoulutsang Y."/>
            <person name="Topham K."/>
            <person name="Topping I."/>
            <person name="Tsamla T."/>
            <person name="Vassiliev H."/>
            <person name="Venkataraman V."/>
            <person name="Vo A."/>
            <person name="Wangchuk T."/>
            <person name="Wangdi T."/>
            <person name="Weiand M."/>
            <person name="Wilkinson J."/>
            <person name="Wilson A."/>
            <person name="Yadav S."/>
            <person name="Yang S."/>
            <person name="Yang X."/>
            <person name="Young G."/>
            <person name="Yu Q."/>
            <person name="Zainoun J."/>
            <person name="Zembek L."/>
            <person name="Zimmer A."/>
            <person name="Lander E.S."/>
        </authorList>
    </citation>
    <scope>NUCLEOTIDE SEQUENCE [LARGE SCALE GENOMIC DNA]</scope>
    <source>
        <strain>Boxer</strain>
    </source>
</reference>
<comment type="function">
    <text evidence="1">Allows the formation of correctly charged Gln-tRNA(Gln) through the transamidation of misacylated Glu-tRNA(Gln) in the mitochondria. The reaction takes place in the presence of glutamine and ATP through an activated gamma-phospho-Glu-tRNA(Gln).</text>
</comment>
<comment type="catalytic activity">
    <reaction evidence="1">
        <text>L-glutamyl-tRNA(Gln) + L-glutamine + ATP + H2O = L-glutaminyl-tRNA(Gln) + L-glutamate + ADP + phosphate + H(+)</text>
        <dbReference type="Rhea" id="RHEA:17521"/>
        <dbReference type="Rhea" id="RHEA-COMP:9681"/>
        <dbReference type="Rhea" id="RHEA-COMP:9684"/>
        <dbReference type="ChEBI" id="CHEBI:15377"/>
        <dbReference type="ChEBI" id="CHEBI:15378"/>
        <dbReference type="ChEBI" id="CHEBI:29985"/>
        <dbReference type="ChEBI" id="CHEBI:30616"/>
        <dbReference type="ChEBI" id="CHEBI:43474"/>
        <dbReference type="ChEBI" id="CHEBI:58359"/>
        <dbReference type="ChEBI" id="CHEBI:78520"/>
        <dbReference type="ChEBI" id="CHEBI:78521"/>
        <dbReference type="ChEBI" id="CHEBI:456216"/>
        <dbReference type="EC" id="6.3.5.7"/>
    </reaction>
</comment>
<comment type="subunit">
    <text evidence="1">Subunit of the heterotrimeric GatCAB amidotransferase (AdT) complex, composed of A (QRSL1), B (GATB) and C (GATC) subunits.</text>
</comment>
<comment type="subcellular location">
    <subcellularLocation>
        <location evidence="1">Mitochondrion</location>
    </subcellularLocation>
</comment>
<comment type="similarity">
    <text evidence="1">Belongs to the amidase family. GatA subfamily.</text>
</comment>
<evidence type="ECO:0000255" key="1">
    <source>
        <dbReference type="HAMAP-Rule" id="MF_03150"/>
    </source>
</evidence>
<gene>
    <name evidence="1" type="primary">QRSL1</name>
</gene>
<accession>E2QUD0</accession>
<protein>
    <recommendedName>
        <fullName evidence="1">Glutamyl-tRNA(Gln) amidotransferase subunit A, mitochondrial</fullName>
        <shortName evidence="1">Glu-AdT subunit A</shortName>
        <ecNumber evidence="1">6.3.5.7</ecNumber>
    </recommendedName>
    <alternativeName>
        <fullName evidence="1">Glutaminyl-tRNA synthase-like protein 1</fullName>
    </alternativeName>
</protein>
<keyword id="KW-0067">ATP-binding</keyword>
<keyword id="KW-0436">Ligase</keyword>
<keyword id="KW-0496">Mitochondrion</keyword>
<keyword id="KW-0547">Nucleotide-binding</keyword>
<keyword id="KW-0648">Protein biosynthesis</keyword>
<keyword id="KW-1185">Reference proteome</keyword>
<organism>
    <name type="scientific">Canis lupus familiaris</name>
    <name type="common">Dog</name>
    <name type="synonym">Canis familiaris</name>
    <dbReference type="NCBI Taxonomy" id="9615"/>
    <lineage>
        <taxon>Eukaryota</taxon>
        <taxon>Metazoa</taxon>
        <taxon>Chordata</taxon>
        <taxon>Craniata</taxon>
        <taxon>Vertebrata</taxon>
        <taxon>Euteleostomi</taxon>
        <taxon>Mammalia</taxon>
        <taxon>Eutheria</taxon>
        <taxon>Laurasiatheria</taxon>
        <taxon>Carnivora</taxon>
        <taxon>Caniformia</taxon>
        <taxon>Canidae</taxon>
        <taxon>Canis</taxon>
    </lineage>
</organism>
<name>GATA_CANLF</name>
<dbReference type="EC" id="6.3.5.7" evidence="1"/>
<dbReference type="SMR" id="E2QUD0"/>
<dbReference type="FunCoup" id="E2QUD0">
    <property type="interactions" value="1152"/>
</dbReference>
<dbReference type="STRING" id="9615.ENSCAFP00000005562"/>
<dbReference type="PaxDb" id="9612-ENSCAFP00000005562"/>
<dbReference type="eggNOG" id="KOG1211">
    <property type="taxonomic scope" value="Eukaryota"/>
</dbReference>
<dbReference type="InParanoid" id="E2QUD0"/>
<dbReference type="OrthoDB" id="421993at2759"/>
<dbReference type="Proteomes" id="UP000002254">
    <property type="component" value="Unplaced"/>
</dbReference>
<dbReference type="Proteomes" id="UP000694429">
    <property type="component" value="Unplaced"/>
</dbReference>
<dbReference type="Proteomes" id="UP000694542">
    <property type="component" value="Unplaced"/>
</dbReference>
<dbReference type="Proteomes" id="UP000805418">
    <property type="component" value="Unplaced"/>
</dbReference>
<dbReference type="GO" id="GO:0030956">
    <property type="term" value="C:glutamyl-tRNA(Gln) amidotransferase complex"/>
    <property type="evidence" value="ECO:0000318"/>
    <property type="project" value="GO_Central"/>
</dbReference>
<dbReference type="GO" id="GO:0005739">
    <property type="term" value="C:mitochondrion"/>
    <property type="evidence" value="ECO:0000318"/>
    <property type="project" value="GO_Central"/>
</dbReference>
<dbReference type="GO" id="GO:0005524">
    <property type="term" value="F:ATP binding"/>
    <property type="evidence" value="ECO:0007669"/>
    <property type="project" value="UniProtKB-KW"/>
</dbReference>
<dbReference type="GO" id="GO:0050567">
    <property type="term" value="F:glutaminyl-tRNA synthase (glutamine-hydrolyzing) activity"/>
    <property type="evidence" value="ECO:0000318"/>
    <property type="project" value="GO_Central"/>
</dbReference>
<dbReference type="GO" id="GO:0070681">
    <property type="term" value="P:glutaminyl-tRNAGln biosynthesis via transamidation"/>
    <property type="evidence" value="ECO:0000318"/>
    <property type="project" value="GO_Central"/>
</dbReference>
<dbReference type="GO" id="GO:0032543">
    <property type="term" value="P:mitochondrial translation"/>
    <property type="evidence" value="ECO:0000318"/>
    <property type="project" value="GO_Central"/>
</dbReference>
<dbReference type="FunFam" id="3.90.1300.10:FF:000002">
    <property type="entry name" value="Glutamyl-tRNA(Gln) amidotransferase subunit A, mitochondrial"/>
    <property type="match status" value="1"/>
</dbReference>
<dbReference type="Gene3D" id="3.90.1300.10">
    <property type="entry name" value="Amidase signature (AS) domain"/>
    <property type="match status" value="1"/>
</dbReference>
<dbReference type="HAMAP" id="MF_00120">
    <property type="entry name" value="GatA"/>
    <property type="match status" value="1"/>
</dbReference>
<dbReference type="InterPro" id="IPR000120">
    <property type="entry name" value="Amidase"/>
</dbReference>
<dbReference type="InterPro" id="IPR023631">
    <property type="entry name" value="Amidase_dom"/>
</dbReference>
<dbReference type="InterPro" id="IPR036928">
    <property type="entry name" value="AS_sf"/>
</dbReference>
<dbReference type="InterPro" id="IPR004412">
    <property type="entry name" value="GatA"/>
</dbReference>
<dbReference type="NCBIfam" id="TIGR00132">
    <property type="entry name" value="gatA"/>
    <property type="match status" value="1"/>
</dbReference>
<dbReference type="PANTHER" id="PTHR11895:SF7">
    <property type="entry name" value="GLUTAMYL-TRNA(GLN) AMIDOTRANSFERASE SUBUNIT A, MITOCHONDRIAL"/>
    <property type="match status" value="1"/>
</dbReference>
<dbReference type="PANTHER" id="PTHR11895">
    <property type="entry name" value="TRANSAMIDASE"/>
    <property type="match status" value="1"/>
</dbReference>
<dbReference type="Pfam" id="PF01425">
    <property type="entry name" value="Amidase"/>
    <property type="match status" value="2"/>
</dbReference>
<dbReference type="SUPFAM" id="SSF75304">
    <property type="entry name" value="Amidase signature (AS) enzymes"/>
    <property type="match status" value="1"/>
</dbReference>
<proteinExistence type="inferred from homology"/>
<feature type="chain" id="PRO_0000413331" description="Glutamyl-tRNA(Gln) amidotransferase subunit A, mitochondrial">
    <location>
        <begin position="1"/>
        <end position="526"/>
    </location>
</feature>
<feature type="active site" description="Charge relay system" evidence="1">
    <location>
        <position position="76"/>
    </location>
</feature>
<feature type="active site" description="Charge relay system" evidence="1">
    <location>
        <position position="171"/>
    </location>
</feature>
<feature type="active site" description="Acyl-ester intermediate" evidence="1">
    <location>
        <position position="195"/>
    </location>
</feature>